<sequence>MKFLLLVLAALRFLTQVIPASAGGSKCVSNTPGYCRTYCHQGETALFMCNASRKCCVSYSFLPKPDLPQLIGNHWQSRRRNTQRKDKKQQTTVTS</sequence>
<gene>
    <name type="primary">DEFB132</name>
</gene>
<protein>
    <recommendedName>
        <fullName>Beta-defensin 132</fullName>
    </recommendedName>
    <alternativeName>
        <fullName>Defensin, beta 132</fullName>
    </alternativeName>
</protein>
<keyword id="KW-0044">Antibiotic</keyword>
<keyword id="KW-0929">Antimicrobial</keyword>
<keyword id="KW-0211">Defensin</keyword>
<keyword id="KW-1015">Disulfide bond</keyword>
<keyword id="KW-0964">Secreted</keyword>
<keyword id="KW-0732">Signal</keyword>
<evidence type="ECO:0000250" key="1"/>
<evidence type="ECO:0000255" key="2"/>
<evidence type="ECO:0000256" key="3">
    <source>
        <dbReference type="SAM" id="MobiDB-lite"/>
    </source>
</evidence>
<evidence type="ECO:0000305" key="4"/>
<reference key="1">
    <citation type="submission" date="2006-11" db="EMBL/GenBank/DDBJ databases">
        <title>Evolution and sequence variation of human beta-defensin genes.</title>
        <authorList>
            <person name="Hollox E.J."/>
            <person name="Armour J.A.L."/>
        </authorList>
    </citation>
    <scope>NUCLEOTIDE SEQUENCE [GENOMIC DNA]</scope>
</reference>
<dbReference type="EMBL" id="AM410168">
    <property type="protein sequence ID" value="CAL68978.1"/>
    <property type="molecule type" value="Genomic_DNA"/>
</dbReference>
<dbReference type="RefSeq" id="XP_054322829.1">
    <property type="nucleotide sequence ID" value="XM_054466854.1"/>
</dbReference>
<dbReference type="GeneID" id="129021453"/>
<dbReference type="GO" id="GO:0005576">
    <property type="term" value="C:extracellular region"/>
    <property type="evidence" value="ECO:0007669"/>
    <property type="project" value="UniProtKB-SubCell"/>
</dbReference>
<dbReference type="GO" id="GO:0050829">
    <property type="term" value="P:defense response to Gram-negative bacterium"/>
    <property type="evidence" value="ECO:0007669"/>
    <property type="project" value="UniProtKB-ARBA"/>
</dbReference>
<dbReference type="GO" id="GO:0045087">
    <property type="term" value="P:innate immune response"/>
    <property type="evidence" value="ECO:0007669"/>
    <property type="project" value="InterPro"/>
</dbReference>
<dbReference type="InterPro" id="IPR050544">
    <property type="entry name" value="Beta-defensin"/>
</dbReference>
<dbReference type="InterPro" id="IPR025933">
    <property type="entry name" value="Beta_defensin_dom"/>
</dbReference>
<dbReference type="PANTHER" id="PTHR15001:SF3">
    <property type="entry name" value="BETA-DEFENSIN 123"/>
    <property type="match status" value="1"/>
</dbReference>
<dbReference type="PANTHER" id="PTHR15001">
    <property type="entry name" value="BETA-DEFENSIN 123-RELATED"/>
    <property type="match status" value="1"/>
</dbReference>
<dbReference type="Pfam" id="PF13841">
    <property type="entry name" value="Defensin_beta_2"/>
    <property type="match status" value="1"/>
</dbReference>
<name>DB132_PONPY</name>
<accession>A4H263</accession>
<organism>
    <name type="scientific">Pongo pygmaeus</name>
    <name type="common">Bornean orangutan</name>
    <dbReference type="NCBI Taxonomy" id="9600"/>
    <lineage>
        <taxon>Eukaryota</taxon>
        <taxon>Metazoa</taxon>
        <taxon>Chordata</taxon>
        <taxon>Craniata</taxon>
        <taxon>Vertebrata</taxon>
        <taxon>Euteleostomi</taxon>
        <taxon>Mammalia</taxon>
        <taxon>Eutheria</taxon>
        <taxon>Euarchontoglires</taxon>
        <taxon>Primates</taxon>
        <taxon>Haplorrhini</taxon>
        <taxon>Catarrhini</taxon>
        <taxon>Hominidae</taxon>
        <taxon>Pongo</taxon>
    </lineage>
</organism>
<feature type="signal peptide" evidence="2">
    <location>
        <begin position="1"/>
        <end position="22"/>
    </location>
</feature>
<feature type="chain" id="PRO_0000289861" description="Beta-defensin 132">
    <location>
        <begin position="23"/>
        <end position="95"/>
    </location>
</feature>
<feature type="region of interest" description="Disordered" evidence="3">
    <location>
        <begin position="72"/>
        <end position="95"/>
    </location>
</feature>
<feature type="compositionally biased region" description="Basic residues" evidence="3">
    <location>
        <begin position="76"/>
        <end position="87"/>
    </location>
</feature>
<feature type="disulfide bond" evidence="1">
    <location>
        <begin position="27"/>
        <end position="55"/>
    </location>
</feature>
<feature type="disulfide bond" evidence="1">
    <location>
        <begin position="35"/>
        <end position="49"/>
    </location>
</feature>
<feature type="disulfide bond" evidence="1">
    <location>
        <begin position="39"/>
        <end position="56"/>
    </location>
</feature>
<proteinExistence type="inferred from homology"/>
<comment type="function">
    <text evidence="4">Has antibacterial activity.</text>
</comment>
<comment type="subcellular location">
    <subcellularLocation>
        <location evidence="4">Secreted</location>
    </subcellularLocation>
</comment>
<comment type="similarity">
    <text evidence="4">Belongs to the beta-defensin family.</text>
</comment>